<feature type="chain" id="PRO_0000109939" description="Heme chaperone HemW">
    <location>
        <begin position="1"/>
        <end position="379"/>
    </location>
</feature>
<feature type="domain" description="Radical SAM core" evidence="4">
    <location>
        <begin position="1"/>
        <end position="233"/>
    </location>
</feature>
<feature type="binding site" evidence="1">
    <location>
        <position position="5"/>
    </location>
    <ligand>
        <name>S-adenosyl-L-methionine</name>
        <dbReference type="ChEBI" id="CHEBI:59789"/>
        <label>1</label>
    </ligand>
</feature>
<feature type="binding site" evidence="1">
    <location>
        <position position="11"/>
    </location>
    <ligand>
        <name>[4Fe-4S] cluster</name>
        <dbReference type="ChEBI" id="CHEBI:49883"/>
        <note>4Fe-4S-S-AdoMet</note>
    </ligand>
</feature>
<feature type="binding site" evidence="1">
    <location>
        <position position="15"/>
    </location>
    <ligand>
        <name>[4Fe-4S] cluster</name>
        <dbReference type="ChEBI" id="CHEBI:49883"/>
        <note>4Fe-4S-S-AdoMet</note>
    </ligand>
</feature>
<feature type="binding site" evidence="1">
    <location>
        <position position="18"/>
    </location>
    <ligand>
        <name>[4Fe-4S] cluster</name>
        <dbReference type="ChEBI" id="CHEBI:49883"/>
        <note>4Fe-4S-S-AdoMet</note>
    </ligand>
</feature>
<feature type="binding site" evidence="1">
    <location>
        <position position="60"/>
    </location>
    <ligand>
        <name>S-adenosyl-L-methionine</name>
        <dbReference type="ChEBI" id="CHEBI:59789"/>
        <label>1</label>
    </ligand>
</feature>
<feature type="binding site" evidence="1">
    <location>
        <begin position="61"/>
        <end position="62"/>
    </location>
    <ligand>
        <name>S-adenosyl-L-methionine</name>
        <dbReference type="ChEBI" id="CHEBI:59789"/>
        <label>2</label>
    </ligand>
</feature>
<feature type="binding site" evidence="1">
    <location>
        <position position="94"/>
    </location>
    <ligand>
        <name>S-adenosyl-L-methionine</name>
        <dbReference type="ChEBI" id="CHEBI:59789"/>
        <label>1</label>
    </ligand>
</feature>
<feature type="binding site" evidence="1">
    <location>
        <position position="121"/>
    </location>
    <ligand>
        <name>S-adenosyl-L-methionine</name>
        <dbReference type="ChEBI" id="CHEBI:59789"/>
        <label>2</label>
    </ligand>
</feature>
<feature type="binding site" evidence="1">
    <location>
        <position position="133"/>
    </location>
    <ligand>
        <name>S-adenosyl-L-methionine</name>
        <dbReference type="ChEBI" id="CHEBI:59789"/>
        <label>2</label>
    </ligand>
</feature>
<feature type="binding site" evidence="1">
    <location>
        <position position="158"/>
    </location>
    <ligand>
        <name>S-adenosyl-L-methionine</name>
        <dbReference type="ChEBI" id="CHEBI:59789"/>
        <label>2</label>
    </ligand>
</feature>
<feature type="sequence conflict" description="In Ref. 2; BAA12461." evidence="9" ref="2">
    <original>E</original>
    <variation>D</variation>
    <location>
        <position position="94"/>
    </location>
</feature>
<feature type="sequence conflict" description="In Ref. 1; CAB61616." evidence="9" ref="1">
    <original>I</original>
    <variation>S</variation>
    <location>
        <position position="175"/>
    </location>
</feature>
<feature type="sequence conflict" description="In Ref. 1; CAB61616, 2; BAA12461 and 5; M84964." evidence="9" ref="1 2 5">
    <original>KLLGNEVFGAFLGEL</original>
    <variation>NY</variation>
    <location>
        <begin position="365"/>
        <end position="379"/>
    </location>
</feature>
<name>HEMW_BACSU</name>
<sequence>MKSAYIHIPFCEHICHYCDFNKYFIQSQPVDEYLNALEQEMINTIAKTGQPDLKTIFIGGGTPTSLSEEQLKKLMDMINRVLKPSSDLSEFAVEANPDDLSAEKLKILKEAGVNRLSFGVQTFEDDLLEKIGRVHKQKDVFTSFERAREIGFENISLDLMFGLPGQTLKHLEHSINTALSLDAEHYSVYSLIVEPKTVFYNLMQKGRLHLPPQEQEAEMYEIVMSKMEAHGIHQYEISNFAKAGMESKHNLTYWSNEQYFGFGAGAHGYIGGTRTVNVGPVKHYIDLIAEKGFPYRDTHEVTTEEQIEEEMFLGLRKTAGVSKKRFAEKYGRSLDGLFPSVLKDLAEKGLIHNSESAVYLTHQGKLLGNEVFGAFLGEL</sequence>
<organism>
    <name type="scientific">Bacillus subtilis (strain 168)</name>
    <dbReference type="NCBI Taxonomy" id="224308"/>
    <lineage>
        <taxon>Bacteria</taxon>
        <taxon>Bacillati</taxon>
        <taxon>Bacillota</taxon>
        <taxon>Bacilli</taxon>
        <taxon>Bacillales</taxon>
        <taxon>Bacillaceae</taxon>
        <taxon>Bacillus</taxon>
    </lineage>
</organism>
<comment type="function">
    <text evidence="1 2">Probably acts as a heme chaperone, transferring heme to an unknown acceptor. Binds one molecule of heme per monomer, possibly covalently (By similarity). Binds 1 [4Fe-4S] cluster. The cluster is coordinated with 3 cysteines and an exchangeable S-adenosyl-L-methionine (By similarity).</text>
</comment>
<comment type="cofactor">
    <cofactor evidence="4">
        <name>[4Fe-4S] cluster</name>
        <dbReference type="ChEBI" id="CHEBI:49883"/>
    </cofactor>
</comment>
<comment type="subcellular location">
    <subcellularLocation>
        <location evidence="3">Cytoplasm</location>
    </subcellularLocation>
</comment>
<comment type="induction">
    <text evidence="5 6 7">Part of the lepA-hemN operon; there is a strong transcriptional terminator between the 2 genes, this gene is much less transcribed. There can be further readthough downstream (PubMed:8757728, PubMed:9371469). Induced under anaerobic conditions by resDE, fnr and arfM.</text>
</comment>
<comment type="disruption phenotype">
    <text evidence="5 7">Cells lacking this gene accumulate coproporphyrinogen-III under anaerobic conditions, but show normal growth under aerobic and anaerobic conditions.</text>
</comment>
<comment type="miscellaneous">
    <text evidence="1">Might carry two S-adenosyl-L-methionine binding sites with only one binding to the iron-sulfur cluster.</text>
</comment>
<comment type="similarity">
    <text evidence="9">Belongs to the anaerobic coproporphyrinogen-III oxidase family. HemW subfamily.</text>
</comment>
<comment type="caution">
    <text evidence="10 11">Although the bacteria accumulates coproporphyrinogen-III when the gene is disrupted, no oxygen-independent coproporphyrinogen-III oxidase activity or complementation have been shown. The exact role of this protein is unknown.</text>
</comment>
<dbReference type="EMBL" id="X91655">
    <property type="protein sequence ID" value="CAB61616.1"/>
    <property type="molecule type" value="Genomic_DNA"/>
</dbReference>
<dbReference type="EMBL" id="D84432">
    <property type="protein sequence ID" value="BAA12461.1"/>
    <property type="molecule type" value="Genomic_DNA"/>
</dbReference>
<dbReference type="EMBL" id="AL009126">
    <property type="protein sequence ID" value="CAB14492.2"/>
    <property type="molecule type" value="Genomic_DNA"/>
</dbReference>
<dbReference type="EMBL" id="M84964">
    <property type="status" value="NOT_ANNOTATED_CDS"/>
    <property type="molecule type" value="Genomic_DNA"/>
</dbReference>
<dbReference type="PIR" id="B69640">
    <property type="entry name" value="B69640"/>
</dbReference>
<dbReference type="RefSeq" id="NP_390428.2">
    <property type="nucleotide sequence ID" value="NC_000964.3"/>
</dbReference>
<dbReference type="RefSeq" id="WP_004398764.1">
    <property type="nucleotide sequence ID" value="NZ_OZ025638.1"/>
</dbReference>
<dbReference type="SMR" id="P54304"/>
<dbReference type="FunCoup" id="P54304">
    <property type="interactions" value="520"/>
</dbReference>
<dbReference type="STRING" id="224308.BSU25500"/>
<dbReference type="PaxDb" id="224308-BSU25500"/>
<dbReference type="EnsemblBacteria" id="CAB14492">
    <property type="protein sequence ID" value="CAB14492"/>
    <property type="gene ID" value="BSU_25500"/>
</dbReference>
<dbReference type="GeneID" id="937845"/>
<dbReference type="KEGG" id="bsu:BSU25500"/>
<dbReference type="PATRIC" id="fig|224308.179.peg.2771"/>
<dbReference type="eggNOG" id="COG0635">
    <property type="taxonomic scope" value="Bacteria"/>
</dbReference>
<dbReference type="InParanoid" id="P54304"/>
<dbReference type="OrthoDB" id="9808022at2"/>
<dbReference type="PhylomeDB" id="P54304"/>
<dbReference type="BioCyc" id="BSUB:BSU25500-MONOMER"/>
<dbReference type="Proteomes" id="UP000001570">
    <property type="component" value="Chromosome"/>
</dbReference>
<dbReference type="GO" id="GO:0005737">
    <property type="term" value="C:cytoplasm"/>
    <property type="evidence" value="ECO:0000250"/>
    <property type="project" value="UniProtKB"/>
</dbReference>
<dbReference type="GO" id="GO:0051539">
    <property type="term" value="F:4 iron, 4 sulfur cluster binding"/>
    <property type="evidence" value="ECO:0000250"/>
    <property type="project" value="UniProtKB"/>
</dbReference>
<dbReference type="GO" id="GO:0004109">
    <property type="term" value="F:coproporphyrinogen oxidase activity"/>
    <property type="evidence" value="ECO:0007669"/>
    <property type="project" value="InterPro"/>
</dbReference>
<dbReference type="GO" id="GO:0046872">
    <property type="term" value="F:metal ion binding"/>
    <property type="evidence" value="ECO:0007669"/>
    <property type="project" value="UniProtKB-KW"/>
</dbReference>
<dbReference type="GO" id="GO:0006779">
    <property type="term" value="P:porphyrin-containing compound biosynthetic process"/>
    <property type="evidence" value="ECO:0000315"/>
    <property type="project" value="UniProtKB"/>
</dbReference>
<dbReference type="CDD" id="cd01335">
    <property type="entry name" value="Radical_SAM"/>
    <property type="match status" value="1"/>
</dbReference>
<dbReference type="FunFam" id="3.20.20.70:FF:000166">
    <property type="entry name" value="Heme chaperone HemW"/>
    <property type="match status" value="1"/>
</dbReference>
<dbReference type="Gene3D" id="3.20.20.70">
    <property type="entry name" value="Aldolase class I"/>
    <property type="match status" value="1"/>
</dbReference>
<dbReference type="InterPro" id="IPR013785">
    <property type="entry name" value="Aldolase_TIM"/>
</dbReference>
<dbReference type="InterPro" id="IPR034505">
    <property type="entry name" value="Coproporphyrinogen-III_oxidase"/>
</dbReference>
<dbReference type="InterPro" id="IPR006638">
    <property type="entry name" value="Elp3/MiaA/NifB-like_rSAM"/>
</dbReference>
<dbReference type="InterPro" id="IPR010723">
    <property type="entry name" value="HemN_C"/>
</dbReference>
<dbReference type="InterPro" id="IPR004559">
    <property type="entry name" value="HemW-like"/>
</dbReference>
<dbReference type="InterPro" id="IPR007197">
    <property type="entry name" value="rSAM"/>
</dbReference>
<dbReference type="NCBIfam" id="TIGR00539">
    <property type="entry name" value="hemN_rel"/>
    <property type="match status" value="1"/>
</dbReference>
<dbReference type="PANTHER" id="PTHR13932">
    <property type="entry name" value="COPROPORPHYRINIGEN III OXIDASE"/>
    <property type="match status" value="1"/>
</dbReference>
<dbReference type="PANTHER" id="PTHR13932:SF5">
    <property type="entry name" value="RADICAL S-ADENOSYL METHIONINE DOMAIN-CONTAINING PROTEIN 1, MITOCHONDRIAL"/>
    <property type="match status" value="1"/>
</dbReference>
<dbReference type="Pfam" id="PF06969">
    <property type="entry name" value="HemN_C"/>
    <property type="match status" value="1"/>
</dbReference>
<dbReference type="Pfam" id="PF04055">
    <property type="entry name" value="Radical_SAM"/>
    <property type="match status" value="1"/>
</dbReference>
<dbReference type="SFLD" id="SFLDG01082">
    <property type="entry name" value="B12-binding_domain_containing"/>
    <property type="match status" value="1"/>
</dbReference>
<dbReference type="SFLD" id="SFLDF00562">
    <property type="entry name" value="HemN-like__clustered_with_heat"/>
    <property type="match status" value="1"/>
</dbReference>
<dbReference type="SFLD" id="SFLDF00288">
    <property type="entry name" value="HemN-like__clustered_with_nucl"/>
    <property type="match status" value="1"/>
</dbReference>
<dbReference type="SFLD" id="SFLDS00029">
    <property type="entry name" value="Radical_SAM"/>
    <property type="match status" value="1"/>
</dbReference>
<dbReference type="SMART" id="SM00729">
    <property type="entry name" value="Elp3"/>
    <property type="match status" value="1"/>
</dbReference>
<dbReference type="SUPFAM" id="SSF102114">
    <property type="entry name" value="Radical SAM enzymes"/>
    <property type="match status" value="1"/>
</dbReference>
<dbReference type="PROSITE" id="PS51918">
    <property type="entry name" value="RADICAL_SAM"/>
    <property type="match status" value="1"/>
</dbReference>
<gene>
    <name evidence="2" type="primary">hemW</name>
    <name evidence="8" type="synonym">hemN</name>
    <name type="synonym">yqeR</name>
    <name type="ordered locus">BSU25500</name>
</gene>
<proteinExistence type="evidence at transcript level"/>
<accession>P54304</accession>
<reference key="1">
    <citation type="journal article" date="1996" name="Microbiology">
        <title>The genes of lepA and hemN form a bicistronic operon in Bacillus subtilis.</title>
        <authorList>
            <person name="Homuth G."/>
            <person name="Heinemann M."/>
            <person name="Zuber U."/>
            <person name="Schumann W."/>
        </authorList>
    </citation>
    <scope>NUCLEOTIDE SEQUENCE [GENOMIC DNA]</scope>
    <scope>INDUCTION</scope>
    <source>
        <strain>168</strain>
    </source>
</reference>
<reference key="2">
    <citation type="journal article" date="1996" name="Microbiology">
        <title>Systematic sequencing of the 283 kb 210 degrees-232 degrees region of the Bacillus subtilis genome containing the skin element and many sporulation genes.</title>
        <authorList>
            <person name="Mizuno M."/>
            <person name="Masuda S."/>
            <person name="Takemaru K."/>
            <person name="Hosono S."/>
            <person name="Sato T."/>
            <person name="Takeuchi M."/>
            <person name="Kobayashi Y."/>
        </authorList>
    </citation>
    <scope>NUCLEOTIDE SEQUENCE [GENOMIC DNA]</scope>
    <source>
        <strain>168 / JH642</strain>
    </source>
</reference>
<reference key="3">
    <citation type="journal article" date="1997" name="Nature">
        <title>The complete genome sequence of the Gram-positive bacterium Bacillus subtilis.</title>
        <authorList>
            <person name="Kunst F."/>
            <person name="Ogasawara N."/>
            <person name="Moszer I."/>
            <person name="Albertini A.M."/>
            <person name="Alloni G."/>
            <person name="Azevedo V."/>
            <person name="Bertero M.G."/>
            <person name="Bessieres P."/>
            <person name="Bolotin A."/>
            <person name="Borchert S."/>
            <person name="Borriss R."/>
            <person name="Boursier L."/>
            <person name="Brans A."/>
            <person name="Braun M."/>
            <person name="Brignell S.C."/>
            <person name="Bron S."/>
            <person name="Brouillet S."/>
            <person name="Bruschi C.V."/>
            <person name="Caldwell B."/>
            <person name="Capuano V."/>
            <person name="Carter N.M."/>
            <person name="Choi S.-K."/>
            <person name="Codani J.-J."/>
            <person name="Connerton I.F."/>
            <person name="Cummings N.J."/>
            <person name="Daniel R.A."/>
            <person name="Denizot F."/>
            <person name="Devine K.M."/>
            <person name="Duesterhoeft A."/>
            <person name="Ehrlich S.D."/>
            <person name="Emmerson P.T."/>
            <person name="Entian K.-D."/>
            <person name="Errington J."/>
            <person name="Fabret C."/>
            <person name="Ferrari E."/>
            <person name="Foulger D."/>
            <person name="Fritz C."/>
            <person name="Fujita M."/>
            <person name="Fujita Y."/>
            <person name="Fuma S."/>
            <person name="Galizzi A."/>
            <person name="Galleron N."/>
            <person name="Ghim S.-Y."/>
            <person name="Glaser P."/>
            <person name="Goffeau A."/>
            <person name="Golightly E.J."/>
            <person name="Grandi G."/>
            <person name="Guiseppi G."/>
            <person name="Guy B.J."/>
            <person name="Haga K."/>
            <person name="Haiech J."/>
            <person name="Harwood C.R."/>
            <person name="Henaut A."/>
            <person name="Hilbert H."/>
            <person name="Holsappel S."/>
            <person name="Hosono S."/>
            <person name="Hullo M.-F."/>
            <person name="Itaya M."/>
            <person name="Jones L.-M."/>
            <person name="Joris B."/>
            <person name="Karamata D."/>
            <person name="Kasahara Y."/>
            <person name="Klaerr-Blanchard M."/>
            <person name="Klein C."/>
            <person name="Kobayashi Y."/>
            <person name="Koetter P."/>
            <person name="Koningstein G."/>
            <person name="Krogh S."/>
            <person name="Kumano M."/>
            <person name="Kurita K."/>
            <person name="Lapidus A."/>
            <person name="Lardinois S."/>
            <person name="Lauber J."/>
            <person name="Lazarevic V."/>
            <person name="Lee S.-M."/>
            <person name="Levine A."/>
            <person name="Liu H."/>
            <person name="Masuda S."/>
            <person name="Mauel C."/>
            <person name="Medigue C."/>
            <person name="Medina N."/>
            <person name="Mellado R.P."/>
            <person name="Mizuno M."/>
            <person name="Moestl D."/>
            <person name="Nakai S."/>
            <person name="Noback M."/>
            <person name="Noone D."/>
            <person name="O'Reilly M."/>
            <person name="Ogawa K."/>
            <person name="Ogiwara A."/>
            <person name="Oudega B."/>
            <person name="Park S.-H."/>
            <person name="Parro V."/>
            <person name="Pohl T.M."/>
            <person name="Portetelle D."/>
            <person name="Porwollik S."/>
            <person name="Prescott A.M."/>
            <person name="Presecan E."/>
            <person name="Pujic P."/>
            <person name="Purnelle B."/>
            <person name="Rapoport G."/>
            <person name="Rey M."/>
            <person name="Reynolds S."/>
            <person name="Rieger M."/>
            <person name="Rivolta C."/>
            <person name="Rocha E."/>
            <person name="Roche B."/>
            <person name="Rose M."/>
            <person name="Sadaie Y."/>
            <person name="Sato T."/>
            <person name="Scanlan E."/>
            <person name="Schleich S."/>
            <person name="Schroeter R."/>
            <person name="Scoffone F."/>
            <person name="Sekiguchi J."/>
            <person name="Sekowska A."/>
            <person name="Seror S.J."/>
            <person name="Serror P."/>
            <person name="Shin B.-S."/>
            <person name="Soldo B."/>
            <person name="Sorokin A."/>
            <person name="Tacconi E."/>
            <person name="Takagi T."/>
            <person name="Takahashi H."/>
            <person name="Takemaru K."/>
            <person name="Takeuchi M."/>
            <person name="Tamakoshi A."/>
            <person name="Tanaka T."/>
            <person name="Terpstra P."/>
            <person name="Tognoni A."/>
            <person name="Tosato V."/>
            <person name="Uchiyama S."/>
            <person name="Vandenbol M."/>
            <person name="Vannier F."/>
            <person name="Vassarotti A."/>
            <person name="Viari A."/>
            <person name="Wambutt R."/>
            <person name="Wedler E."/>
            <person name="Wedler H."/>
            <person name="Weitzenegger T."/>
            <person name="Winters P."/>
            <person name="Wipat A."/>
            <person name="Yamamoto H."/>
            <person name="Yamane K."/>
            <person name="Yasumoto K."/>
            <person name="Yata K."/>
            <person name="Yoshida K."/>
            <person name="Yoshikawa H.-F."/>
            <person name="Zumstein E."/>
            <person name="Yoshikawa H."/>
            <person name="Danchin A."/>
        </authorList>
    </citation>
    <scope>NUCLEOTIDE SEQUENCE [LARGE SCALE GENOMIC DNA]</scope>
    <source>
        <strain>168</strain>
    </source>
</reference>
<reference key="4">
    <citation type="journal article" date="2009" name="Microbiology">
        <title>From a consortium sequence to a unified sequence: the Bacillus subtilis 168 reference genome a decade later.</title>
        <authorList>
            <person name="Barbe V."/>
            <person name="Cruveiller S."/>
            <person name="Kunst F."/>
            <person name="Lenoble P."/>
            <person name="Meurice G."/>
            <person name="Sekowska A."/>
            <person name="Vallenet D."/>
            <person name="Wang T."/>
            <person name="Moszer I."/>
            <person name="Medigue C."/>
            <person name="Danchin A."/>
        </authorList>
    </citation>
    <scope>SEQUENCE REVISION TO 94 AND 365-379</scope>
</reference>
<reference key="5">
    <citation type="journal article" date="1992" name="J. Bacteriol.">
        <title>Cloning, sequencing, and molecular analysis of the dnaK locus from Bacillus subtilis.</title>
        <authorList>
            <person name="Wetzstein M."/>
            <person name="Voelker U."/>
            <person name="Dedio J."/>
            <person name="Loebau S."/>
            <person name="Zuber U."/>
            <person name="Schiesswohl M."/>
            <person name="Herget C."/>
            <person name="Hecker M."/>
            <person name="Schumann W."/>
        </authorList>
    </citation>
    <scope>NUCLEOTIDE SEQUENCE [GENOMIC DNA] OF 328-366</scope>
    <source>
        <strain>168 / MB11</strain>
    </source>
</reference>
<reference key="6">
    <citation type="journal article" date="1997" name="J. Bacteriol.">
        <title>Characterization of Bacillus subtilis hemN.</title>
        <authorList>
            <person name="Hippler B."/>
            <person name="Homuth G."/>
            <person name="Hoffmann T."/>
            <person name="Hungerer C."/>
            <person name="Schumann W."/>
            <person name="Jahn D."/>
        </authorList>
    </citation>
    <scope>INDUCTION</scope>
    <scope>DISRUPTION PHENOTYPE</scope>
    <source>
        <strain>168</strain>
    </source>
</reference>
<reference key="7">
    <citation type="journal article" date="1999" name="J. Bacteriol.">
        <title>Transcriptional control of Bacillus subtilis hemN and hemZ.</title>
        <authorList>
            <person name="Homuth G."/>
            <person name="Rompf A."/>
            <person name="Schumann W."/>
            <person name="Jahn D."/>
        </authorList>
    </citation>
    <scope>INDUCTION</scope>
    <scope>DISRUPTION PHENOTYPE</scope>
</reference>
<reference key="8">
    <citation type="thesis" date="1977" institute="University of Geneva" country="Switzerland">
        <authorList>
            <person name="Hauert J."/>
        </authorList>
    </citation>
    <scope>CAUTION</scope>
    <source>
        <strain>168</strain>
    </source>
</reference>
<protein>
    <recommendedName>
        <fullName>Heme chaperone HemW</fullName>
    </recommendedName>
</protein>
<keyword id="KW-0004">4Fe-4S</keyword>
<keyword id="KW-0143">Chaperone</keyword>
<keyword id="KW-0963">Cytoplasm</keyword>
<keyword id="KW-0349">Heme</keyword>
<keyword id="KW-0408">Iron</keyword>
<keyword id="KW-0411">Iron-sulfur</keyword>
<keyword id="KW-0479">Metal-binding</keyword>
<keyword id="KW-1185">Reference proteome</keyword>
<keyword id="KW-0949">S-adenosyl-L-methionine</keyword>
<evidence type="ECO:0000250" key="1">
    <source>
        <dbReference type="UniProtKB" id="P32131"/>
    </source>
</evidence>
<evidence type="ECO:0000250" key="2">
    <source>
        <dbReference type="UniProtKB" id="P52062"/>
    </source>
</evidence>
<evidence type="ECO:0000250" key="3">
    <source>
        <dbReference type="UniProtKB" id="Q9CGF7"/>
    </source>
</evidence>
<evidence type="ECO:0000255" key="4">
    <source>
        <dbReference type="PROSITE-ProRule" id="PRU01266"/>
    </source>
</evidence>
<evidence type="ECO:0000269" key="5">
    <source>
    </source>
</evidence>
<evidence type="ECO:0000269" key="6">
    <source>
    </source>
</evidence>
<evidence type="ECO:0000269" key="7">
    <source>
    </source>
</evidence>
<evidence type="ECO:0000303" key="8">
    <source>
    </source>
</evidence>
<evidence type="ECO:0000305" key="9"/>
<evidence type="ECO:0000305" key="10">
    <source>
    </source>
</evidence>
<evidence type="ECO:0000305" key="11">
    <source>
    </source>
</evidence>